<gene>
    <name evidence="1" type="primary">rpmJ</name>
    <name type="ordered locus">Cpar_0200</name>
</gene>
<comment type="similarity">
    <text evidence="1">Belongs to the bacterial ribosomal protein bL36 family.</text>
</comment>
<proteinExistence type="inferred from homology"/>
<reference key="1">
    <citation type="submission" date="2008-06" db="EMBL/GenBank/DDBJ databases">
        <title>Complete sequence of Chlorobaculum parvum NCIB 8327.</title>
        <authorList>
            <consortium name="US DOE Joint Genome Institute"/>
            <person name="Lucas S."/>
            <person name="Copeland A."/>
            <person name="Lapidus A."/>
            <person name="Glavina del Rio T."/>
            <person name="Dalin E."/>
            <person name="Tice H."/>
            <person name="Bruce D."/>
            <person name="Goodwin L."/>
            <person name="Pitluck S."/>
            <person name="Schmutz J."/>
            <person name="Larimer F."/>
            <person name="Land M."/>
            <person name="Hauser L."/>
            <person name="Kyrpides N."/>
            <person name="Mikhailova N."/>
            <person name="Zhao F."/>
            <person name="Li T."/>
            <person name="Liu Z."/>
            <person name="Overmann J."/>
            <person name="Bryant D.A."/>
            <person name="Richardson P."/>
        </authorList>
    </citation>
    <scope>NUCLEOTIDE SEQUENCE [LARGE SCALE GENOMIC DNA]</scope>
    <source>
        <strain>DSM 263 / NCIMB 8327</strain>
    </source>
</reference>
<feature type="chain" id="PRO_1000101015" description="Large ribosomal subunit protein bL36">
    <location>
        <begin position="1"/>
        <end position="38"/>
    </location>
</feature>
<dbReference type="EMBL" id="CP001099">
    <property type="protein sequence ID" value="ACF10627.1"/>
    <property type="molecule type" value="Genomic_DNA"/>
</dbReference>
<dbReference type="RefSeq" id="WP_012501461.1">
    <property type="nucleotide sequence ID" value="NC_011027.1"/>
</dbReference>
<dbReference type="SMR" id="B3QR94"/>
<dbReference type="STRING" id="517417.Cpar_0200"/>
<dbReference type="KEGG" id="cpc:Cpar_0200"/>
<dbReference type="eggNOG" id="COG0257">
    <property type="taxonomic scope" value="Bacteria"/>
</dbReference>
<dbReference type="HOGENOM" id="CLU_135723_6_2_10"/>
<dbReference type="OrthoDB" id="9801558at2"/>
<dbReference type="Proteomes" id="UP000008811">
    <property type="component" value="Chromosome"/>
</dbReference>
<dbReference type="GO" id="GO:1990904">
    <property type="term" value="C:ribonucleoprotein complex"/>
    <property type="evidence" value="ECO:0007669"/>
    <property type="project" value="UniProtKB-KW"/>
</dbReference>
<dbReference type="GO" id="GO:0005840">
    <property type="term" value="C:ribosome"/>
    <property type="evidence" value="ECO:0007669"/>
    <property type="project" value="UniProtKB-KW"/>
</dbReference>
<dbReference type="GO" id="GO:0003735">
    <property type="term" value="F:structural constituent of ribosome"/>
    <property type="evidence" value="ECO:0007669"/>
    <property type="project" value="InterPro"/>
</dbReference>
<dbReference type="GO" id="GO:0006412">
    <property type="term" value="P:translation"/>
    <property type="evidence" value="ECO:0007669"/>
    <property type="project" value="UniProtKB-UniRule"/>
</dbReference>
<dbReference type="HAMAP" id="MF_00251">
    <property type="entry name" value="Ribosomal_bL36"/>
    <property type="match status" value="1"/>
</dbReference>
<dbReference type="InterPro" id="IPR000473">
    <property type="entry name" value="Ribosomal_bL36"/>
</dbReference>
<dbReference type="InterPro" id="IPR035977">
    <property type="entry name" value="Ribosomal_bL36_sp"/>
</dbReference>
<dbReference type="InterPro" id="IPR052010">
    <property type="entry name" value="Ribosomal_LSU_bL36"/>
</dbReference>
<dbReference type="NCBIfam" id="TIGR01022">
    <property type="entry name" value="rpmJ_bact"/>
    <property type="match status" value="1"/>
</dbReference>
<dbReference type="PANTHER" id="PTHR18804">
    <property type="entry name" value="RIBOSOMAL PROTEIN"/>
    <property type="match status" value="1"/>
</dbReference>
<dbReference type="PANTHER" id="PTHR18804:SF16">
    <property type="entry name" value="RIBOSOMAL PROTEIN"/>
    <property type="match status" value="1"/>
</dbReference>
<dbReference type="Pfam" id="PF00444">
    <property type="entry name" value="Ribosomal_L36"/>
    <property type="match status" value="1"/>
</dbReference>
<dbReference type="SUPFAM" id="SSF57840">
    <property type="entry name" value="Ribosomal protein L36"/>
    <property type="match status" value="1"/>
</dbReference>
<dbReference type="PROSITE" id="PS00828">
    <property type="entry name" value="RIBOSOMAL_L36"/>
    <property type="match status" value="1"/>
</dbReference>
<organism>
    <name type="scientific">Chlorobaculum parvum (strain DSM 263 / NCIMB 8327)</name>
    <name type="common">Chlorobium vibrioforme subsp. thiosulfatophilum</name>
    <dbReference type="NCBI Taxonomy" id="517417"/>
    <lineage>
        <taxon>Bacteria</taxon>
        <taxon>Pseudomonadati</taxon>
        <taxon>Chlorobiota</taxon>
        <taxon>Chlorobiia</taxon>
        <taxon>Chlorobiales</taxon>
        <taxon>Chlorobiaceae</taxon>
        <taxon>Chlorobaculum</taxon>
    </lineage>
</organism>
<sequence length="38" mass="4588">MKVYSSIKKRCEHCRIIKRKGKRYVICKVNPSHKQRQG</sequence>
<accession>B3QR94</accession>
<protein>
    <recommendedName>
        <fullName evidence="1">Large ribosomal subunit protein bL36</fullName>
    </recommendedName>
    <alternativeName>
        <fullName evidence="2">50S ribosomal protein L36</fullName>
    </alternativeName>
</protein>
<keyword id="KW-0687">Ribonucleoprotein</keyword>
<keyword id="KW-0689">Ribosomal protein</keyword>
<evidence type="ECO:0000255" key="1">
    <source>
        <dbReference type="HAMAP-Rule" id="MF_00251"/>
    </source>
</evidence>
<evidence type="ECO:0000305" key="2"/>
<name>RL36_CHLP8</name>